<accession>B5ERJ0</accession>
<proteinExistence type="inferred from homology"/>
<reference key="1">
    <citation type="submission" date="2008-08" db="EMBL/GenBank/DDBJ databases">
        <title>Complete sequence of Acidithiobacillus ferrooxidans ATCC 53993.</title>
        <authorList>
            <person name="Lucas S."/>
            <person name="Copeland A."/>
            <person name="Lapidus A."/>
            <person name="Glavina del Rio T."/>
            <person name="Dalin E."/>
            <person name="Tice H."/>
            <person name="Bruce D."/>
            <person name="Goodwin L."/>
            <person name="Pitluck S."/>
            <person name="Sims D."/>
            <person name="Brettin T."/>
            <person name="Detter J.C."/>
            <person name="Han C."/>
            <person name="Kuske C.R."/>
            <person name="Larimer F."/>
            <person name="Land M."/>
            <person name="Hauser L."/>
            <person name="Kyrpides N."/>
            <person name="Lykidis A."/>
            <person name="Borole A.P."/>
        </authorList>
    </citation>
    <scope>NUCLEOTIDE SEQUENCE [LARGE SCALE GENOMIC DNA]</scope>
    <source>
        <strain>ATCC 53993 / BNL-5-31</strain>
    </source>
</reference>
<protein>
    <recommendedName>
        <fullName evidence="1">Phosphoglycerate kinase</fullName>
        <ecNumber evidence="1">2.7.2.3</ecNumber>
    </recommendedName>
</protein>
<dbReference type="EC" id="2.7.2.3" evidence="1"/>
<dbReference type="EMBL" id="CP001132">
    <property type="protein sequence ID" value="ACH85036.1"/>
    <property type="molecule type" value="Genomic_DNA"/>
</dbReference>
<dbReference type="RefSeq" id="WP_012537677.1">
    <property type="nucleotide sequence ID" value="NC_011206.1"/>
</dbReference>
<dbReference type="SMR" id="B5ERJ0"/>
<dbReference type="KEGG" id="afe:Lferr_2851"/>
<dbReference type="eggNOG" id="COG0126">
    <property type="taxonomic scope" value="Bacteria"/>
</dbReference>
<dbReference type="HOGENOM" id="CLU_025427_0_2_6"/>
<dbReference type="UniPathway" id="UPA00109">
    <property type="reaction ID" value="UER00185"/>
</dbReference>
<dbReference type="GO" id="GO:0005829">
    <property type="term" value="C:cytosol"/>
    <property type="evidence" value="ECO:0007669"/>
    <property type="project" value="TreeGrafter"/>
</dbReference>
<dbReference type="GO" id="GO:0043531">
    <property type="term" value="F:ADP binding"/>
    <property type="evidence" value="ECO:0007669"/>
    <property type="project" value="TreeGrafter"/>
</dbReference>
<dbReference type="GO" id="GO:0005524">
    <property type="term" value="F:ATP binding"/>
    <property type="evidence" value="ECO:0007669"/>
    <property type="project" value="UniProtKB-KW"/>
</dbReference>
<dbReference type="GO" id="GO:0004618">
    <property type="term" value="F:phosphoglycerate kinase activity"/>
    <property type="evidence" value="ECO:0007669"/>
    <property type="project" value="UniProtKB-UniRule"/>
</dbReference>
<dbReference type="GO" id="GO:0006094">
    <property type="term" value="P:gluconeogenesis"/>
    <property type="evidence" value="ECO:0007669"/>
    <property type="project" value="TreeGrafter"/>
</dbReference>
<dbReference type="GO" id="GO:0006096">
    <property type="term" value="P:glycolytic process"/>
    <property type="evidence" value="ECO:0007669"/>
    <property type="project" value="UniProtKB-UniRule"/>
</dbReference>
<dbReference type="FunFam" id="3.40.50.1260:FF:000001">
    <property type="entry name" value="Phosphoglycerate kinase"/>
    <property type="match status" value="1"/>
</dbReference>
<dbReference type="FunFam" id="3.40.50.1260:FF:000002">
    <property type="entry name" value="Phosphoglycerate kinase"/>
    <property type="match status" value="1"/>
</dbReference>
<dbReference type="Gene3D" id="3.40.50.1260">
    <property type="entry name" value="Phosphoglycerate kinase, N-terminal domain"/>
    <property type="match status" value="2"/>
</dbReference>
<dbReference type="HAMAP" id="MF_00145">
    <property type="entry name" value="Phosphoglyc_kinase"/>
    <property type="match status" value="1"/>
</dbReference>
<dbReference type="InterPro" id="IPR001576">
    <property type="entry name" value="Phosphoglycerate_kinase"/>
</dbReference>
<dbReference type="InterPro" id="IPR015911">
    <property type="entry name" value="Phosphoglycerate_kinase_CS"/>
</dbReference>
<dbReference type="InterPro" id="IPR015824">
    <property type="entry name" value="Phosphoglycerate_kinase_N"/>
</dbReference>
<dbReference type="InterPro" id="IPR036043">
    <property type="entry name" value="Phosphoglycerate_kinase_sf"/>
</dbReference>
<dbReference type="PANTHER" id="PTHR11406">
    <property type="entry name" value="PHOSPHOGLYCERATE KINASE"/>
    <property type="match status" value="1"/>
</dbReference>
<dbReference type="PANTHER" id="PTHR11406:SF23">
    <property type="entry name" value="PHOSPHOGLYCERATE KINASE 1, CHLOROPLASTIC-RELATED"/>
    <property type="match status" value="1"/>
</dbReference>
<dbReference type="Pfam" id="PF00162">
    <property type="entry name" value="PGK"/>
    <property type="match status" value="1"/>
</dbReference>
<dbReference type="PIRSF" id="PIRSF000724">
    <property type="entry name" value="Pgk"/>
    <property type="match status" value="1"/>
</dbReference>
<dbReference type="PRINTS" id="PR00477">
    <property type="entry name" value="PHGLYCKINASE"/>
</dbReference>
<dbReference type="SUPFAM" id="SSF53748">
    <property type="entry name" value="Phosphoglycerate kinase"/>
    <property type="match status" value="1"/>
</dbReference>
<dbReference type="PROSITE" id="PS00111">
    <property type="entry name" value="PGLYCERATE_KINASE"/>
    <property type="match status" value="1"/>
</dbReference>
<evidence type="ECO:0000255" key="1">
    <source>
        <dbReference type="HAMAP-Rule" id="MF_00145"/>
    </source>
</evidence>
<comment type="catalytic activity">
    <reaction evidence="1">
        <text>(2R)-3-phosphoglycerate + ATP = (2R)-3-phospho-glyceroyl phosphate + ADP</text>
        <dbReference type="Rhea" id="RHEA:14801"/>
        <dbReference type="ChEBI" id="CHEBI:30616"/>
        <dbReference type="ChEBI" id="CHEBI:57604"/>
        <dbReference type="ChEBI" id="CHEBI:58272"/>
        <dbReference type="ChEBI" id="CHEBI:456216"/>
        <dbReference type="EC" id="2.7.2.3"/>
    </reaction>
</comment>
<comment type="pathway">
    <text evidence="1">Carbohydrate degradation; glycolysis; pyruvate from D-glyceraldehyde 3-phosphate: step 2/5.</text>
</comment>
<comment type="subunit">
    <text evidence="1">Monomer.</text>
</comment>
<comment type="subcellular location">
    <subcellularLocation>
        <location evidence="1">Cytoplasm</location>
    </subcellularLocation>
</comment>
<comment type="similarity">
    <text evidence="1">Belongs to the phosphoglycerate kinase family.</text>
</comment>
<keyword id="KW-0067">ATP-binding</keyword>
<keyword id="KW-0963">Cytoplasm</keyword>
<keyword id="KW-0324">Glycolysis</keyword>
<keyword id="KW-0418">Kinase</keyword>
<keyword id="KW-0547">Nucleotide-binding</keyword>
<keyword id="KW-0808">Transferase</keyword>
<gene>
    <name evidence="1" type="primary">pgk</name>
    <name type="ordered locus">Lferr_2851</name>
</gene>
<sequence>MNVLRMMDVPLKGKRVLIREDLNVPMNDAGAITDDTRIRASLPTIRAALASGARVMLMSHLGRPKEGVFDEKASLAPVAAHLSQLLGRDVPLVRDWLDAGKDRLAQLQDGDVVVLENVRFNTGESKDDEALSKKMAALCDVFVMDAFGTAHRAQASTHGVGKFAPVACAGPLLVNELDALGKALQNPRRPLVAIVAGSKVSTKLTILKSLADKVDQLVVGGGIANTFILAAGHSVGKSLCEADLVPDAQAIIAAARAKGGDVPLPSDVVVAKAFSETAPARTCRVDDIAADDMVLDIGPDTAKTLGDILRKAGTIVWNGPVGVFEFDAFAGGTEAIARAVAESSAFSIAGGGDTIAAINKFHIEDKVSYISTGGGAFLEFLEGKTLPAVAMLEERARGTHT</sequence>
<feature type="chain" id="PRO_1000096315" description="Phosphoglycerate kinase">
    <location>
        <begin position="1"/>
        <end position="401"/>
    </location>
</feature>
<feature type="binding site" evidence="1">
    <location>
        <begin position="21"/>
        <end position="23"/>
    </location>
    <ligand>
        <name>substrate</name>
    </ligand>
</feature>
<feature type="binding site" evidence="1">
    <location>
        <position position="37"/>
    </location>
    <ligand>
        <name>substrate</name>
    </ligand>
</feature>
<feature type="binding site" evidence="1">
    <location>
        <begin position="60"/>
        <end position="63"/>
    </location>
    <ligand>
        <name>substrate</name>
    </ligand>
</feature>
<feature type="binding site" evidence="1">
    <location>
        <position position="119"/>
    </location>
    <ligand>
        <name>substrate</name>
    </ligand>
</feature>
<feature type="binding site" evidence="1">
    <location>
        <position position="152"/>
    </location>
    <ligand>
        <name>substrate</name>
    </ligand>
</feature>
<feature type="binding site" evidence="1">
    <location>
        <position position="203"/>
    </location>
    <ligand>
        <name>ATP</name>
        <dbReference type="ChEBI" id="CHEBI:30616"/>
    </ligand>
</feature>
<feature type="binding site" evidence="1">
    <location>
        <position position="325"/>
    </location>
    <ligand>
        <name>ATP</name>
        <dbReference type="ChEBI" id="CHEBI:30616"/>
    </ligand>
</feature>
<feature type="binding site" evidence="1">
    <location>
        <begin position="351"/>
        <end position="354"/>
    </location>
    <ligand>
        <name>ATP</name>
        <dbReference type="ChEBI" id="CHEBI:30616"/>
    </ligand>
</feature>
<organism>
    <name type="scientific">Acidithiobacillus ferrooxidans (strain ATCC 53993 / BNL-5-31)</name>
    <name type="common">Leptospirillum ferrooxidans (ATCC 53993)</name>
    <dbReference type="NCBI Taxonomy" id="380394"/>
    <lineage>
        <taxon>Bacteria</taxon>
        <taxon>Pseudomonadati</taxon>
        <taxon>Pseudomonadota</taxon>
        <taxon>Acidithiobacillia</taxon>
        <taxon>Acidithiobacillales</taxon>
        <taxon>Acidithiobacillaceae</taxon>
        <taxon>Acidithiobacillus</taxon>
    </lineage>
</organism>
<name>PGK_ACIF5</name>